<name>DEF_NEIM0</name>
<sequence>MALLNILQYPDERLHTVAKPVEQVDERIRKLIADMFETMYESRGIGLAATQVDVHERVVVMDLTEDRSEPRVFINPVIVEKDGETTYEEGCLSVPGIYDTVTRAERVKVEALNEKGEKFTLEADGLLAICVQHELDHLMGIVFVERLSQLKQGRIKTKLKKRQKHTI</sequence>
<protein>
    <recommendedName>
        <fullName evidence="1">Peptide deformylase</fullName>
        <shortName evidence="1">PDF</shortName>
        <ecNumber evidence="1">3.5.1.88</ecNumber>
    </recommendedName>
    <alternativeName>
        <fullName evidence="1">Polypeptide deformylase</fullName>
    </alternativeName>
</protein>
<gene>
    <name evidence="1" type="primary">def</name>
    <name type="ordered locus">NMCC_2039</name>
</gene>
<evidence type="ECO:0000255" key="1">
    <source>
        <dbReference type="HAMAP-Rule" id="MF_00163"/>
    </source>
</evidence>
<reference key="1">
    <citation type="journal article" date="2008" name="Genomics">
        <title>Characterization of ST-4821 complex, a unique Neisseria meningitidis clone.</title>
        <authorList>
            <person name="Peng J."/>
            <person name="Yang L."/>
            <person name="Yang F."/>
            <person name="Yang J."/>
            <person name="Yan Y."/>
            <person name="Nie H."/>
            <person name="Zhang X."/>
            <person name="Xiong Z."/>
            <person name="Jiang Y."/>
            <person name="Cheng F."/>
            <person name="Xu X."/>
            <person name="Chen S."/>
            <person name="Sun L."/>
            <person name="Li W."/>
            <person name="Shen Y."/>
            <person name="Shao Z."/>
            <person name="Liang X."/>
            <person name="Xu J."/>
            <person name="Jin Q."/>
        </authorList>
    </citation>
    <scope>NUCLEOTIDE SEQUENCE [LARGE SCALE GENOMIC DNA]</scope>
    <source>
        <strain>053442</strain>
    </source>
</reference>
<dbReference type="EC" id="3.5.1.88" evidence="1"/>
<dbReference type="EMBL" id="CP000381">
    <property type="protein sequence ID" value="ABX74158.1"/>
    <property type="molecule type" value="Genomic_DNA"/>
</dbReference>
<dbReference type="RefSeq" id="WP_002216218.1">
    <property type="nucleotide sequence ID" value="NC_010120.1"/>
</dbReference>
<dbReference type="SMR" id="A9M464"/>
<dbReference type="GeneID" id="93387182"/>
<dbReference type="KEGG" id="nmn:NMCC_2039"/>
<dbReference type="HOGENOM" id="CLU_061901_2_1_4"/>
<dbReference type="Proteomes" id="UP000001177">
    <property type="component" value="Chromosome"/>
</dbReference>
<dbReference type="GO" id="GO:0046872">
    <property type="term" value="F:metal ion binding"/>
    <property type="evidence" value="ECO:0007669"/>
    <property type="project" value="UniProtKB-KW"/>
</dbReference>
<dbReference type="GO" id="GO:0042586">
    <property type="term" value="F:peptide deformylase activity"/>
    <property type="evidence" value="ECO:0007669"/>
    <property type="project" value="UniProtKB-UniRule"/>
</dbReference>
<dbReference type="GO" id="GO:0043686">
    <property type="term" value="P:co-translational protein modification"/>
    <property type="evidence" value="ECO:0007669"/>
    <property type="project" value="TreeGrafter"/>
</dbReference>
<dbReference type="GO" id="GO:0006412">
    <property type="term" value="P:translation"/>
    <property type="evidence" value="ECO:0007669"/>
    <property type="project" value="UniProtKB-UniRule"/>
</dbReference>
<dbReference type="CDD" id="cd00487">
    <property type="entry name" value="Pep_deformylase"/>
    <property type="match status" value="1"/>
</dbReference>
<dbReference type="FunFam" id="3.90.45.10:FF:000001">
    <property type="entry name" value="Peptide deformylase"/>
    <property type="match status" value="1"/>
</dbReference>
<dbReference type="Gene3D" id="3.90.45.10">
    <property type="entry name" value="Peptide deformylase"/>
    <property type="match status" value="1"/>
</dbReference>
<dbReference type="HAMAP" id="MF_00163">
    <property type="entry name" value="Pep_deformylase"/>
    <property type="match status" value="1"/>
</dbReference>
<dbReference type="InterPro" id="IPR023635">
    <property type="entry name" value="Peptide_deformylase"/>
</dbReference>
<dbReference type="InterPro" id="IPR036821">
    <property type="entry name" value="Peptide_deformylase_sf"/>
</dbReference>
<dbReference type="NCBIfam" id="TIGR00079">
    <property type="entry name" value="pept_deformyl"/>
    <property type="match status" value="1"/>
</dbReference>
<dbReference type="NCBIfam" id="NF001159">
    <property type="entry name" value="PRK00150.1-3"/>
    <property type="match status" value="1"/>
</dbReference>
<dbReference type="PANTHER" id="PTHR10458">
    <property type="entry name" value="PEPTIDE DEFORMYLASE"/>
    <property type="match status" value="1"/>
</dbReference>
<dbReference type="PANTHER" id="PTHR10458:SF22">
    <property type="entry name" value="PEPTIDE DEFORMYLASE"/>
    <property type="match status" value="1"/>
</dbReference>
<dbReference type="Pfam" id="PF01327">
    <property type="entry name" value="Pep_deformylase"/>
    <property type="match status" value="1"/>
</dbReference>
<dbReference type="PIRSF" id="PIRSF004749">
    <property type="entry name" value="Pep_def"/>
    <property type="match status" value="1"/>
</dbReference>
<dbReference type="PRINTS" id="PR01576">
    <property type="entry name" value="PDEFORMYLASE"/>
</dbReference>
<dbReference type="SUPFAM" id="SSF56420">
    <property type="entry name" value="Peptide deformylase"/>
    <property type="match status" value="1"/>
</dbReference>
<keyword id="KW-0378">Hydrolase</keyword>
<keyword id="KW-0408">Iron</keyword>
<keyword id="KW-0479">Metal-binding</keyword>
<keyword id="KW-0648">Protein biosynthesis</keyword>
<proteinExistence type="inferred from homology"/>
<feature type="chain" id="PRO_1000076947" description="Peptide deformylase">
    <location>
        <begin position="1"/>
        <end position="167"/>
    </location>
</feature>
<feature type="active site" evidence="1">
    <location>
        <position position="134"/>
    </location>
</feature>
<feature type="binding site" evidence="1">
    <location>
        <position position="91"/>
    </location>
    <ligand>
        <name>Fe cation</name>
        <dbReference type="ChEBI" id="CHEBI:24875"/>
    </ligand>
</feature>
<feature type="binding site" evidence="1">
    <location>
        <position position="133"/>
    </location>
    <ligand>
        <name>Fe cation</name>
        <dbReference type="ChEBI" id="CHEBI:24875"/>
    </ligand>
</feature>
<feature type="binding site" evidence="1">
    <location>
        <position position="137"/>
    </location>
    <ligand>
        <name>Fe cation</name>
        <dbReference type="ChEBI" id="CHEBI:24875"/>
    </ligand>
</feature>
<organism>
    <name type="scientific">Neisseria meningitidis serogroup C (strain 053442)</name>
    <dbReference type="NCBI Taxonomy" id="374833"/>
    <lineage>
        <taxon>Bacteria</taxon>
        <taxon>Pseudomonadati</taxon>
        <taxon>Pseudomonadota</taxon>
        <taxon>Betaproteobacteria</taxon>
        <taxon>Neisseriales</taxon>
        <taxon>Neisseriaceae</taxon>
        <taxon>Neisseria</taxon>
    </lineage>
</organism>
<accession>A9M464</accession>
<comment type="function">
    <text evidence="1">Removes the formyl group from the N-terminal Met of newly synthesized proteins. Requires at least a dipeptide for an efficient rate of reaction. N-terminal L-methionine is a prerequisite for activity but the enzyme has broad specificity at other positions.</text>
</comment>
<comment type="catalytic activity">
    <reaction evidence="1">
        <text>N-terminal N-formyl-L-methionyl-[peptide] + H2O = N-terminal L-methionyl-[peptide] + formate</text>
        <dbReference type="Rhea" id="RHEA:24420"/>
        <dbReference type="Rhea" id="RHEA-COMP:10639"/>
        <dbReference type="Rhea" id="RHEA-COMP:10640"/>
        <dbReference type="ChEBI" id="CHEBI:15377"/>
        <dbReference type="ChEBI" id="CHEBI:15740"/>
        <dbReference type="ChEBI" id="CHEBI:49298"/>
        <dbReference type="ChEBI" id="CHEBI:64731"/>
        <dbReference type="EC" id="3.5.1.88"/>
    </reaction>
</comment>
<comment type="cofactor">
    <cofactor evidence="1">
        <name>Fe(2+)</name>
        <dbReference type="ChEBI" id="CHEBI:29033"/>
    </cofactor>
    <text evidence="1">Binds 1 Fe(2+) ion.</text>
</comment>
<comment type="similarity">
    <text evidence="1">Belongs to the polypeptide deformylase family.</text>
</comment>